<accession>Q661B7</accession>
<sequence length="123" mass="14462">MKTKLGFNRLSRKSSHRRALLKNMVISFLKHEKISSTKAKLFEVKRFAERLITRAKVDTVHNRRELSKFIHDKYILNKLFTKISPVFRQRSGGYTRMIKLGKRYGDAAEMAILELVEKPLKVE</sequence>
<proteinExistence type="inferred from homology"/>
<comment type="subunit">
    <text evidence="1">Part of the 50S ribosomal subunit. Contacts protein L32.</text>
</comment>
<comment type="similarity">
    <text evidence="1">Belongs to the bacterial ribosomal protein bL17 family.</text>
</comment>
<name>RL17_BORGP</name>
<gene>
    <name evidence="1" type="primary">rplQ</name>
    <name type="ordered locus">BG0515</name>
</gene>
<reference key="1">
    <citation type="journal article" date="2004" name="Nucleic Acids Res.">
        <title>Comparative analysis of the Borrelia garinii genome.</title>
        <authorList>
            <person name="Gloeckner G."/>
            <person name="Lehmann R."/>
            <person name="Romualdi A."/>
            <person name="Pradella S."/>
            <person name="Schulte-Spechtel U."/>
            <person name="Schilhabel M."/>
            <person name="Wilske B."/>
            <person name="Suehnel J."/>
            <person name="Platzer M."/>
        </authorList>
    </citation>
    <scope>NUCLEOTIDE SEQUENCE [LARGE SCALE GENOMIC DNA]</scope>
    <source>
        <strain>ATCC BAA-2496 / DSM 23469 / PBi</strain>
    </source>
</reference>
<organism>
    <name type="scientific">Borrelia garinii subsp. bavariensis (strain ATCC BAA-2496 / DSM 23469 / PBi)</name>
    <name type="common">Borreliella bavariensis</name>
    <dbReference type="NCBI Taxonomy" id="290434"/>
    <lineage>
        <taxon>Bacteria</taxon>
        <taxon>Pseudomonadati</taxon>
        <taxon>Spirochaetota</taxon>
        <taxon>Spirochaetia</taxon>
        <taxon>Spirochaetales</taxon>
        <taxon>Borreliaceae</taxon>
        <taxon>Borreliella</taxon>
    </lineage>
</organism>
<evidence type="ECO:0000255" key="1">
    <source>
        <dbReference type="HAMAP-Rule" id="MF_01368"/>
    </source>
</evidence>
<evidence type="ECO:0000305" key="2"/>
<dbReference type="EMBL" id="CP000013">
    <property type="protein sequence ID" value="AAU07354.1"/>
    <property type="molecule type" value="Genomic_DNA"/>
</dbReference>
<dbReference type="RefSeq" id="WP_011193816.1">
    <property type="nucleotide sequence ID" value="NZ_CP028872.1"/>
</dbReference>
<dbReference type="SMR" id="Q661B7"/>
<dbReference type="GeneID" id="45161297"/>
<dbReference type="KEGG" id="bga:BG0515"/>
<dbReference type="eggNOG" id="COG0203">
    <property type="taxonomic scope" value="Bacteria"/>
</dbReference>
<dbReference type="HOGENOM" id="CLU_074407_2_0_12"/>
<dbReference type="OrthoDB" id="9809073at2"/>
<dbReference type="Proteomes" id="UP000002276">
    <property type="component" value="Chromosome"/>
</dbReference>
<dbReference type="GO" id="GO:0022625">
    <property type="term" value="C:cytosolic large ribosomal subunit"/>
    <property type="evidence" value="ECO:0007669"/>
    <property type="project" value="TreeGrafter"/>
</dbReference>
<dbReference type="GO" id="GO:0003735">
    <property type="term" value="F:structural constituent of ribosome"/>
    <property type="evidence" value="ECO:0007669"/>
    <property type="project" value="InterPro"/>
</dbReference>
<dbReference type="GO" id="GO:0006412">
    <property type="term" value="P:translation"/>
    <property type="evidence" value="ECO:0007669"/>
    <property type="project" value="UniProtKB-UniRule"/>
</dbReference>
<dbReference type="FunFam" id="3.90.1030.10:FF:000018">
    <property type="entry name" value="50S ribosomal protein L17"/>
    <property type="match status" value="1"/>
</dbReference>
<dbReference type="Gene3D" id="3.90.1030.10">
    <property type="entry name" value="Ribosomal protein L17"/>
    <property type="match status" value="1"/>
</dbReference>
<dbReference type="HAMAP" id="MF_01368">
    <property type="entry name" value="Ribosomal_bL17"/>
    <property type="match status" value="1"/>
</dbReference>
<dbReference type="InterPro" id="IPR000456">
    <property type="entry name" value="Ribosomal_bL17"/>
</dbReference>
<dbReference type="InterPro" id="IPR047859">
    <property type="entry name" value="Ribosomal_bL17_CS"/>
</dbReference>
<dbReference type="InterPro" id="IPR036373">
    <property type="entry name" value="Ribosomal_bL17_sf"/>
</dbReference>
<dbReference type="NCBIfam" id="TIGR00059">
    <property type="entry name" value="L17"/>
    <property type="match status" value="1"/>
</dbReference>
<dbReference type="PANTHER" id="PTHR14413:SF16">
    <property type="entry name" value="LARGE RIBOSOMAL SUBUNIT PROTEIN BL17M"/>
    <property type="match status" value="1"/>
</dbReference>
<dbReference type="PANTHER" id="PTHR14413">
    <property type="entry name" value="RIBOSOMAL PROTEIN L17"/>
    <property type="match status" value="1"/>
</dbReference>
<dbReference type="Pfam" id="PF01196">
    <property type="entry name" value="Ribosomal_L17"/>
    <property type="match status" value="1"/>
</dbReference>
<dbReference type="SUPFAM" id="SSF64263">
    <property type="entry name" value="Prokaryotic ribosomal protein L17"/>
    <property type="match status" value="1"/>
</dbReference>
<dbReference type="PROSITE" id="PS01167">
    <property type="entry name" value="RIBOSOMAL_L17"/>
    <property type="match status" value="1"/>
</dbReference>
<feature type="chain" id="PRO_1000055778" description="Large ribosomal subunit protein bL17">
    <location>
        <begin position="1"/>
        <end position="123"/>
    </location>
</feature>
<keyword id="KW-0687">Ribonucleoprotein</keyword>
<keyword id="KW-0689">Ribosomal protein</keyword>
<protein>
    <recommendedName>
        <fullName evidence="1">Large ribosomal subunit protein bL17</fullName>
    </recommendedName>
    <alternativeName>
        <fullName evidence="2">50S ribosomal protein L17</fullName>
    </alternativeName>
</protein>